<organism>
    <name type="scientific">Cavia porcellus</name>
    <name type="common">Guinea pig</name>
    <dbReference type="NCBI Taxonomy" id="10141"/>
    <lineage>
        <taxon>Eukaryota</taxon>
        <taxon>Metazoa</taxon>
        <taxon>Chordata</taxon>
        <taxon>Craniata</taxon>
        <taxon>Vertebrata</taxon>
        <taxon>Euteleostomi</taxon>
        <taxon>Mammalia</taxon>
        <taxon>Eutheria</taxon>
        <taxon>Euarchontoglires</taxon>
        <taxon>Glires</taxon>
        <taxon>Rodentia</taxon>
        <taxon>Hystricomorpha</taxon>
        <taxon>Caviidae</taxon>
        <taxon>Cavia</taxon>
    </lineage>
</organism>
<keyword id="KW-1003">Cell membrane</keyword>
<keyword id="KW-1015">Disulfide bond</keyword>
<keyword id="KW-0297">G-protein coupled receptor</keyword>
<keyword id="KW-0325">Glycoprotein</keyword>
<keyword id="KW-0449">Lipoprotein</keyword>
<keyword id="KW-0472">Membrane</keyword>
<keyword id="KW-0564">Palmitate</keyword>
<keyword id="KW-0597">Phosphoprotein</keyword>
<keyword id="KW-0675">Receptor</keyword>
<keyword id="KW-1185">Reference proteome</keyword>
<keyword id="KW-0807">Transducer</keyword>
<keyword id="KW-0812">Transmembrane</keyword>
<keyword id="KW-1133">Transmembrane helix</keyword>
<sequence length="372" mass="42210">MFNITSQVSALNATLAQGNSCLDAEWWSWLNTIQAPFLWVLFVLAVLENIFVLSVFFLHKSSCTVAEIYLGNLAVADLILAFGLPFWAITIANNFDWLFGEVLCRMVNTMIQMNMYSSICFLMLVSIDRYLALVKTMSMGRMRGVRWAKLYSLVIWGCALLLSSPMLVFRTMKDYRDEGHNVTACLIIYPSLTWQVFTNVLLNLVGFLLPLSIITFCTVQIMQVLRNNEMQKFKEIQTERRATVLVLAVLLLFVVCWLPFQIGTFLDTLRLLGFLPGCWEHVIDLITQISSYLAYSNSCLNPLVYVIVGKRFRKKSREVYHGLCRSGGCVSEPAQSENSMGTLRTSISVDRQIHKLQDWARSSSEGTPPGLL</sequence>
<reference key="1">
    <citation type="journal article" date="1998" name="Eur. J. Pharmacol.">
        <title>Cloning, sequencing and functional expression of a guinea pig lung bradykinin B2 receptor.</title>
        <authorList>
            <person name="Farmer S.G."/>
            <person name="Powell S.J."/>
            <person name="Wilkins D.E."/>
            <person name="Graham A."/>
        </authorList>
    </citation>
    <scope>NUCLEOTIDE SEQUENCE [MRNA]</scope>
    <source>
        <strain>Hartley</strain>
        <tissue>Lung</tissue>
    </source>
</reference>
<feature type="chain" id="PRO_0000069189" description="B2 bradykinin receptor">
    <location>
        <begin position="1"/>
        <end position="372"/>
    </location>
</feature>
<feature type="topological domain" description="Extracellular" evidence="4">
    <location>
        <begin position="1"/>
        <end position="34"/>
    </location>
</feature>
<feature type="transmembrane region" description="Helical; Name=1" evidence="4">
    <location>
        <begin position="35"/>
        <end position="58"/>
    </location>
</feature>
<feature type="topological domain" description="Cytoplasmic" evidence="4">
    <location>
        <begin position="59"/>
        <end position="67"/>
    </location>
</feature>
<feature type="transmembrane region" description="Helical; Name=2" evidence="4">
    <location>
        <begin position="68"/>
        <end position="92"/>
    </location>
</feature>
<feature type="topological domain" description="Extracellular" evidence="4">
    <location>
        <begin position="93"/>
        <end position="105"/>
    </location>
</feature>
<feature type="transmembrane region" description="Helical; Name=3" evidence="4">
    <location>
        <begin position="106"/>
        <end position="127"/>
    </location>
</feature>
<feature type="topological domain" description="Cytoplasmic" evidence="4">
    <location>
        <begin position="128"/>
        <end position="149"/>
    </location>
</feature>
<feature type="transmembrane region" description="Helical; Name=4" evidence="4">
    <location>
        <begin position="150"/>
        <end position="172"/>
    </location>
</feature>
<feature type="topological domain" description="Extracellular" evidence="4">
    <location>
        <begin position="173"/>
        <end position="195"/>
    </location>
</feature>
<feature type="transmembrane region" description="Helical; Name=5" evidence="4">
    <location>
        <begin position="196"/>
        <end position="222"/>
    </location>
</feature>
<feature type="topological domain" description="Cytoplasmic" evidence="4">
    <location>
        <begin position="223"/>
        <end position="241"/>
    </location>
</feature>
<feature type="transmembrane region" description="Helical; Name=6" evidence="4">
    <location>
        <begin position="242"/>
        <end position="266"/>
    </location>
</feature>
<feature type="topological domain" description="Extracellular" evidence="4">
    <location>
        <begin position="267"/>
        <end position="284"/>
    </location>
</feature>
<feature type="transmembrane region" description="Helical; Name=7" evidence="4">
    <location>
        <begin position="285"/>
        <end position="308"/>
    </location>
</feature>
<feature type="topological domain" description="Cytoplasmic" evidence="4">
    <location>
        <begin position="309"/>
        <end position="364"/>
    </location>
</feature>
<feature type="modified residue" description="Phosphotyrosine" evidence="2">
    <location>
        <position position="130"/>
    </location>
</feature>
<feature type="modified residue" description="Phosphotyrosine" evidence="2">
    <location>
        <position position="320"/>
    </location>
</feature>
<feature type="modified residue" description="Phosphoserine" evidence="2">
    <location>
        <position position="339"/>
    </location>
</feature>
<feature type="modified residue" description="Phosphothreonine" evidence="2">
    <location>
        <position position="342"/>
    </location>
</feature>
<feature type="modified residue" description="Phosphoserine; by GRK6" evidence="3">
    <location>
        <position position="346"/>
    </location>
</feature>
<feature type="modified residue" description="Phosphoserine; by GRK6" evidence="3">
    <location>
        <position position="348"/>
    </location>
</feature>
<feature type="lipid moiety-binding region" description="S-palmitoyl cysteine" evidence="1">
    <location>
        <position position="324"/>
    </location>
</feature>
<feature type="glycosylation site" description="N-linked (GlcNAc...) asparagine" evidence="4">
    <location>
        <position position="3"/>
    </location>
</feature>
<feature type="glycosylation site" description="N-linked (GlcNAc...) asparagine" evidence="4">
    <location>
        <position position="12"/>
    </location>
</feature>
<feature type="glycosylation site" description="N-linked (GlcNAc...) asparagine" evidence="4">
    <location>
        <position position="181"/>
    </location>
</feature>
<feature type="disulfide bond" evidence="5">
    <location>
        <begin position="104"/>
        <end position="185"/>
    </location>
</feature>
<comment type="function">
    <text evidence="3">Receptor for bradykinin. It is associated with G proteins that activate a phosphatidylinositol-calcium second messenger system (By similarity).</text>
</comment>
<comment type="subunit">
    <text evidence="3">Forms a complex with PECAM1 and GNAQ. Interacts with PECAM1 (By similarity).</text>
</comment>
<comment type="subcellular location">
    <subcellularLocation>
        <location evidence="3">Cell membrane</location>
        <topology evidence="4">Multi-pass membrane protein</topology>
    </subcellularLocation>
</comment>
<comment type="similarity">
    <text evidence="5">Belongs to the G-protein coupled receptor 1 family. Bradykinin receptor subfamily. BDKRB2 sub-subfamily.</text>
</comment>
<gene>
    <name type="primary">BDKRB2</name>
</gene>
<proteinExistence type="evidence at transcript level"/>
<name>BKRB2_CAVPO</name>
<protein>
    <recommendedName>
        <fullName>B2 bradykinin receptor</fullName>
        <shortName>B2R</shortName>
        <shortName>BK-2 receptor</shortName>
    </recommendedName>
</protein>
<dbReference type="EMBL" id="AJ003243">
    <property type="protein sequence ID" value="CAA06025.1"/>
    <property type="molecule type" value="mRNA"/>
</dbReference>
<dbReference type="RefSeq" id="NP_001166391.1">
    <property type="nucleotide sequence ID" value="NM_001172920.1"/>
</dbReference>
<dbReference type="SMR" id="O70526"/>
<dbReference type="FunCoup" id="O70526">
    <property type="interactions" value="1169"/>
</dbReference>
<dbReference type="STRING" id="10141.ENSCPOP00000020477"/>
<dbReference type="BindingDB" id="O70526"/>
<dbReference type="ChEMBL" id="CHEMBL4111"/>
<dbReference type="DrugCentral" id="O70526"/>
<dbReference type="GlyCosmos" id="O70526">
    <property type="glycosylation" value="3 sites, No reported glycans"/>
</dbReference>
<dbReference type="GeneID" id="100135486"/>
<dbReference type="KEGG" id="cpoc:100135486"/>
<dbReference type="CTD" id="624"/>
<dbReference type="eggNOG" id="ENOG502QTX6">
    <property type="taxonomic scope" value="Eukaryota"/>
</dbReference>
<dbReference type="HOGENOM" id="CLU_009579_8_3_1"/>
<dbReference type="InParanoid" id="O70526"/>
<dbReference type="OrthoDB" id="6076970at2759"/>
<dbReference type="TreeFam" id="TF330024"/>
<dbReference type="PRO" id="PR:O70526"/>
<dbReference type="Proteomes" id="UP000005447">
    <property type="component" value="Unassembled WGS sequence"/>
</dbReference>
<dbReference type="GO" id="GO:0009897">
    <property type="term" value="C:external side of plasma membrane"/>
    <property type="evidence" value="ECO:0007669"/>
    <property type="project" value="TreeGrafter"/>
</dbReference>
<dbReference type="GO" id="GO:0004947">
    <property type="term" value="F:bradykinin receptor activity"/>
    <property type="evidence" value="ECO:0007669"/>
    <property type="project" value="InterPro"/>
</dbReference>
<dbReference type="GO" id="GO:0019957">
    <property type="term" value="F:C-C chemokine binding"/>
    <property type="evidence" value="ECO:0007669"/>
    <property type="project" value="TreeGrafter"/>
</dbReference>
<dbReference type="GO" id="GO:0016493">
    <property type="term" value="F:C-C chemokine receptor activity"/>
    <property type="evidence" value="ECO:0007669"/>
    <property type="project" value="TreeGrafter"/>
</dbReference>
<dbReference type="GO" id="GO:0019722">
    <property type="term" value="P:calcium-mediated signaling"/>
    <property type="evidence" value="ECO:0007669"/>
    <property type="project" value="TreeGrafter"/>
</dbReference>
<dbReference type="GO" id="GO:0060326">
    <property type="term" value="P:cell chemotaxis"/>
    <property type="evidence" value="ECO:0007669"/>
    <property type="project" value="TreeGrafter"/>
</dbReference>
<dbReference type="GO" id="GO:0006955">
    <property type="term" value="P:immune response"/>
    <property type="evidence" value="ECO:0007669"/>
    <property type="project" value="TreeGrafter"/>
</dbReference>
<dbReference type="GO" id="GO:0007204">
    <property type="term" value="P:positive regulation of cytosolic calcium ion concentration"/>
    <property type="evidence" value="ECO:0007669"/>
    <property type="project" value="TreeGrafter"/>
</dbReference>
<dbReference type="GO" id="GO:0006939">
    <property type="term" value="P:smooth muscle contraction"/>
    <property type="evidence" value="ECO:0007669"/>
    <property type="project" value="InterPro"/>
</dbReference>
<dbReference type="GO" id="GO:0042310">
    <property type="term" value="P:vasoconstriction"/>
    <property type="evidence" value="ECO:0007669"/>
    <property type="project" value="InterPro"/>
</dbReference>
<dbReference type="FunFam" id="1.20.1070.10:FF:000201">
    <property type="entry name" value="Bradykinin receptor B2"/>
    <property type="match status" value="1"/>
</dbReference>
<dbReference type="Gene3D" id="1.20.1070.10">
    <property type="entry name" value="Rhodopsin 7-helix transmembrane proteins"/>
    <property type="match status" value="1"/>
</dbReference>
<dbReference type="InterPro" id="IPR001504">
    <property type="entry name" value="Brdyknn_2_rcpt"/>
</dbReference>
<dbReference type="InterPro" id="IPR000496">
    <property type="entry name" value="Brdyknn_rcpt"/>
</dbReference>
<dbReference type="InterPro" id="IPR050119">
    <property type="entry name" value="CCR1-9-like"/>
</dbReference>
<dbReference type="InterPro" id="IPR000276">
    <property type="entry name" value="GPCR_Rhodpsn"/>
</dbReference>
<dbReference type="InterPro" id="IPR017452">
    <property type="entry name" value="GPCR_Rhodpsn_7TM"/>
</dbReference>
<dbReference type="PANTHER" id="PTHR10489:SF957">
    <property type="entry name" value="B2 BRADYKININ RECEPTOR"/>
    <property type="match status" value="1"/>
</dbReference>
<dbReference type="PANTHER" id="PTHR10489">
    <property type="entry name" value="CELL ADHESION MOLECULE"/>
    <property type="match status" value="1"/>
</dbReference>
<dbReference type="Pfam" id="PF00001">
    <property type="entry name" value="7tm_1"/>
    <property type="match status" value="1"/>
</dbReference>
<dbReference type="PRINTS" id="PR00425">
    <property type="entry name" value="BRADYKININR"/>
</dbReference>
<dbReference type="PRINTS" id="PR00994">
    <property type="entry name" value="BRADYKINNB2R"/>
</dbReference>
<dbReference type="PRINTS" id="PR00237">
    <property type="entry name" value="GPCRRHODOPSN"/>
</dbReference>
<dbReference type="SUPFAM" id="SSF81321">
    <property type="entry name" value="Family A G protein-coupled receptor-like"/>
    <property type="match status" value="1"/>
</dbReference>
<dbReference type="PROSITE" id="PS00237">
    <property type="entry name" value="G_PROTEIN_RECEP_F1_1"/>
    <property type="match status" value="1"/>
</dbReference>
<dbReference type="PROSITE" id="PS50262">
    <property type="entry name" value="G_PROTEIN_RECEP_F1_2"/>
    <property type="match status" value="1"/>
</dbReference>
<accession>O70526</accession>
<evidence type="ECO:0000250" key="1"/>
<evidence type="ECO:0000250" key="2">
    <source>
        <dbReference type="UniProtKB" id="P25023"/>
    </source>
</evidence>
<evidence type="ECO:0000250" key="3">
    <source>
        <dbReference type="UniProtKB" id="P30411"/>
    </source>
</evidence>
<evidence type="ECO:0000255" key="4"/>
<evidence type="ECO:0000255" key="5">
    <source>
        <dbReference type="PROSITE-ProRule" id="PRU00521"/>
    </source>
</evidence>